<comment type="catalytic activity">
    <reaction>
        <text>L-serine = pyruvate + NH4(+)</text>
        <dbReference type="Rhea" id="RHEA:19169"/>
        <dbReference type="ChEBI" id="CHEBI:15361"/>
        <dbReference type="ChEBI" id="CHEBI:28938"/>
        <dbReference type="ChEBI" id="CHEBI:33384"/>
        <dbReference type="EC" id="4.3.1.17"/>
    </reaction>
</comment>
<comment type="cofactor">
    <cofactor evidence="1">
        <name>pyridoxal 5'-phosphate</name>
        <dbReference type="ChEBI" id="CHEBI:597326"/>
    </cofactor>
</comment>
<comment type="pathway">
    <text>Carbohydrate biosynthesis; gluconeogenesis.</text>
</comment>
<comment type="subcellular location">
    <subcellularLocation>
        <location evidence="1">Cytoplasm</location>
    </subcellularLocation>
</comment>
<comment type="similarity">
    <text evidence="2">Belongs to the serine/threonine dehydratase family.</text>
</comment>
<organism>
    <name type="scientific">Saccharomyces cerevisiae (strain YJM789)</name>
    <name type="common">Baker's yeast</name>
    <dbReference type="NCBI Taxonomy" id="307796"/>
    <lineage>
        <taxon>Eukaryota</taxon>
        <taxon>Fungi</taxon>
        <taxon>Dikarya</taxon>
        <taxon>Ascomycota</taxon>
        <taxon>Saccharomycotina</taxon>
        <taxon>Saccharomycetes</taxon>
        <taxon>Saccharomycetales</taxon>
        <taxon>Saccharomycetaceae</taxon>
        <taxon>Saccharomyces</taxon>
    </lineage>
</organism>
<gene>
    <name type="primary">SDL1</name>
    <name type="synonym">SDH1</name>
    <name type="ORF">SCY_2627</name>
</gene>
<protein>
    <recommendedName>
        <fullName>L-serine dehydratase</fullName>
        <ecNumber>4.3.1.17</ecNumber>
    </recommendedName>
    <alternativeName>
        <fullName>L-serine deaminase</fullName>
    </alternativeName>
</protein>
<feature type="chain" id="PRO_0000393397" description="L-serine dehydratase">
    <location>
        <begin position="1"/>
        <end position="338"/>
    </location>
</feature>
<feature type="modified residue" description="N6-(pyridoxal phosphate)lysine" evidence="1">
    <location>
        <position position="39"/>
    </location>
</feature>
<sequence>MEMTHYEKTPLIRQVFNNGKTNSWFYVKHEILQPGGSFKSRGIGHLIRKSNEEALSEGSGKLAVFSSSGGNAGLAAATACRSMALNCSVVVPKTTKPRMVKKIQSAGAKVIIHGDHWGEADEYLRHKLMAQESQHGSKTLYVHPFDNETIWEGHSTIVDEIIEQLKENDISLPRVKALVCSVGGGGLFSGIIKGLDRNHLAEKIPVVAVETAGCDVLNKSLKNGSPVTLEKLTSVATSLASPYIASFAFESFNKYGCKSVVLSDQDVLATCLRYADDYNFIVEPACGASLHLCYHPEILEDILEQKIYEDDIVIIIACGGSCMTYEDLVKASSTLNVS</sequence>
<keyword id="KW-0963">Cytoplasm</keyword>
<keyword id="KW-0312">Gluconeogenesis</keyword>
<keyword id="KW-0456">Lyase</keyword>
<keyword id="KW-0663">Pyridoxal phosphate</keyword>
<reference key="1">
    <citation type="journal article" date="2007" name="Proc. Natl. Acad. Sci. U.S.A.">
        <title>Genome sequencing and comparative analysis of Saccharomyces cerevisiae strain YJM789.</title>
        <authorList>
            <person name="Wei W."/>
            <person name="McCusker J.H."/>
            <person name="Hyman R.W."/>
            <person name="Jones T."/>
            <person name="Ning Y."/>
            <person name="Cao Z."/>
            <person name="Gu Z."/>
            <person name="Bruno D."/>
            <person name="Miranda M."/>
            <person name="Nguyen M."/>
            <person name="Wilhelmy J."/>
            <person name="Komp C."/>
            <person name="Tamse R."/>
            <person name="Wang X."/>
            <person name="Jia P."/>
            <person name="Luedi P."/>
            <person name="Oefner P.J."/>
            <person name="David L."/>
            <person name="Dietrich F.S."/>
            <person name="Li Y."/>
            <person name="Davis R.W."/>
            <person name="Steinmetz L.M."/>
        </authorList>
    </citation>
    <scope>NUCLEOTIDE SEQUENCE [LARGE SCALE GENOMIC DNA]</scope>
    <source>
        <strain>YJM789</strain>
    </source>
</reference>
<name>SDHL_YEAS7</name>
<proteinExistence type="inferred from homology"/>
<dbReference type="EC" id="4.3.1.17"/>
<dbReference type="EMBL" id="AAFW02000124">
    <property type="protein sequence ID" value="EDN61336.1"/>
    <property type="molecule type" value="Genomic_DNA"/>
</dbReference>
<dbReference type="SMR" id="A6ZVB1"/>
<dbReference type="HOGENOM" id="CLU_021152_3_1_1"/>
<dbReference type="OrthoDB" id="34905at4893"/>
<dbReference type="UniPathway" id="UPA00138"/>
<dbReference type="Proteomes" id="UP000007060">
    <property type="component" value="Unassembled WGS sequence"/>
</dbReference>
<dbReference type="GO" id="GO:0005737">
    <property type="term" value="C:cytoplasm"/>
    <property type="evidence" value="ECO:0007669"/>
    <property type="project" value="UniProtKB-SubCell"/>
</dbReference>
<dbReference type="GO" id="GO:0003941">
    <property type="term" value="F:L-serine ammonia-lyase activity"/>
    <property type="evidence" value="ECO:0007669"/>
    <property type="project" value="UniProtKB-EC"/>
</dbReference>
<dbReference type="GO" id="GO:0030170">
    <property type="term" value="F:pyridoxal phosphate binding"/>
    <property type="evidence" value="ECO:0007669"/>
    <property type="project" value="InterPro"/>
</dbReference>
<dbReference type="GO" id="GO:0004794">
    <property type="term" value="F:threonine deaminase activity"/>
    <property type="evidence" value="ECO:0007669"/>
    <property type="project" value="UniProtKB-ARBA"/>
</dbReference>
<dbReference type="GO" id="GO:0006094">
    <property type="term" value="P:gluconeogenesis"/>
    <property type="evidence" value="ECO:0007669"/>
    <property type="project" value="UniProtKB-UniPathway"/>
</dbReference>
<dbReference type="GO" id="GO:0009097">
    <property type="term" value="P:isoleucine biosynthetic process"/>
    <property type="evidence" value="ECO:0007669"/>
    <property type="project" value="TreeGrafter"/>
</dbReference>
<dbReference type="GO" id="GO:0006565">
    <property type="term" value="P:L-serine catabolic process"/>
    <property type="evidence" value="ECO:0007669"/>
    <property type="project" value="TreeGrafter"/>
</dbReference>
<dbReference type="GO" id="GO:0006567">
    <property type="term" value="P:threonine catabolic process"/>
    <property type="evidence" value="ECO:0007669"/>
    <property type="project" value="TreeGrafter"/>
</dbReference>
<dbReference type="CDD" id="cd06448">
    <property type="entry name" value="L-Ser-dehyd"/>
    <property type="match status" value="1"/>
</dbReference>
<dbReference type="FunFam" id="3.40.50.1100:FF:000068">
    <property type="entry name" value="Catabolic L-serine/threonine dehydratase"/>
    <property type="match status" value="1"/>
</dbReference>
<dbReference type="FunFam" id="3.40.50.1100:FF:000040">
    <property type="entry name" value="L-serine dehydratase, putative"/>
    <property type="match status" value="1"/>
</dbReference>
<dbReference type="Gene3D" id="3.40.50.1100">
    <property type="match status" value="2"/>
</dbReference>
<dbReference type="InterPro" id="IPR050147">
    <property type="entry name" value="Ser/Thr_Dehydratase"/>
</dbReference>
<dbReference type="InterPro" id="IPR000634">
    <property type="entry name" value="Ser/Thr_deHydtase_PyrdxlP-BS"/>
</dbReference>
<dbReference type="InterPro" id="IPR001926">
    <property type="entry name" value="TrpB-like_PALP"/>
</dbReference>
<dbReference type="InterPro" id="IPR036052">
    <property type="entry name" value="TrpB-like_PALP_sf"/>
</dbReference>
<dbReference type="PANTHER" id="PTHR48078:SF2">
    <property type="entry name" value="CATABOLIC L-SERINE_THREONINE DEHYDRATASE"/>
    <property type="match status" value="1"/>
</dbReference>
<dbReference type="PANTHER" id="PTHR48078">
    <property type="entry name" value="THREONINE DEHYDRATASE, MITOCHONDRIAL-RELATED"/>
    <property type="match status" value="1"/>
</dbReference>
<dbReference type="Pfam" id="PF00291">
    <property type="entry name" value="PALP"/>
    <property type="match status" value="1"/>
</dbReference>
<dbReference type="SUPFAM" id="SSF53686">
    <property type="entry name" value="Tryptophan synthase beta subunit-like PLP-dependent enzymes"/>
    <property type="match status" value="1"/>
</dbReference>
<dbReference type="PROSITE" id="PS00165">
    <property type="entry name" value="DEHYDRATASE_SER_THR"/>
    <property type="match status" value="1"/>
</dbReference>
<accession>A6ZVB1</accession>
<evidence type="ECO:0000250" key="1"/>
<evidence type="ECO:0000305" key="2"/>